<protein>
    <recommendedName>
        <fullName>3 beta-hydroxysteroid dehydrogenase/Delta 5--&gt;4-isomerase type 1</fullName>
    </recommendedName>
    <alternativeName>
        <fullName evidence="1">3 beta-hydroxysteroid dehydrogenase/Delta 5--&gt;4-isomerase type I</fullName>
        <shortName>3-beta-HSD I</shortName>
    </alternativeName>
    <alternativeName>
        <fullName evidence="1">3-beta-hydroxy-5-ene steroid dehydrogenase</fullName>
    </alternativeName>
    <alternativeName>
        <fullName evidence="1">3-beta-hydroxy-Delta(5)-steroid dehydrogenase</fullName>
        <ecNumber evidence="2">1.1.1.145</ecNumber>
    </alternativeName>
    <alternativeName>
        <fullName evidence="1">3-beta-hydroxysteroid 3-dehydrogenase</fullName>
        <ecNumber evidence="2">1.1.1.270</ecNumber>
    </alternativeName>
    <alternativeName>
        <fullName>Delta-5-3-ketosteroid isomerase</fullName>
    </alternativeName>
    <alternativeName>
        <fullName evidence="1">Dihydrotestosterone oxidoreductase</fullName>
        <ecNumber evidence="2">1.1.1.210</ecNumber>
    </alternativeName>
    <alternativeName>
        <fullName evidence="1">Steroid Delta-isomerase</fullName>
        <ecNumber evidence="2">5.3.3.1</ecNumber>
    </alternativeName>
</protein>
<gene>
    <name type="primary">HSD3B1</name>
</gene>
<keyword id="KW-0256">Endoplasmic reticulum</keyword>
<keyword id="KW-0413">Isomerase</keyword>
<keyword id="KW-0443">Lipid metabolism</keyword>
<keyword id="KW-0472">Membrane</keyword>
<keyword id="KW-0496">Mitochondrion</keyword>
<keyword id="KW-0511">Multifunctional enzyme</keyword>
<keyword id="KW-0520">NAD</keyword>
<keyword id="KW-0521">NADP</keyword>
<keyword id="KW-0560">Oxidoreductase</keyword>
<keyword id="KW-1185">Reference proteome</keyword>
<keyword id="KW-0753">Steroid metabolism</keyword>
<keyword id="KW-0755">Steroidogenesis</keyword>
<keyword id="KW-0812">Transmembrane</keyword>
<keyword id="KW-1133">Transmembrane helix</keyword>
<reference key="1">
    <citation type="journal article" date="1995" name="J. Steroid Biochem. Mol. Biol.">
        <title>Expression and characterization of isoforms of 3 beta-hydroxysteroid dehydrogenase/delta 5--&gt;4-isomerase in the hamster.</title>
        <authorList>
            <person name="Rogerson F.M."/>
            <person name="Lehoux J.-G."/>
            <person name="Mason J.I."/>
        </authorList>
    </citation>
    <scope>NUCLEOTIDE SEQUENCE [MRNA]</scope>
    <source>
        <tissue>Adrenal gland</tissue>
    </source>
</reference>
<evidence type="ECO:0000250" key="1">
    <source>
        <dbReference type="UniProtKB" id="P14060"/>
    </source>
</evidence>
<evidence type="ECO:0000250" key="2">
    <source>
        <dbReference type="UniProtKB" id="P22071"/>
    </source>
</evidence>
<evidence type="ECO:0000250" key="3">
    <source>
        <dbReference type="UniProtKB" id="Q12068"/>
    </source>
</evidence>
<evidence type="ECO:0000255" key="4"/>
<evidence type="ECO:0000305" key="5"/>
<sequence length="373" mass="41754">MPGWSCLVTGAGGFLGQRIIRMLVQEKELQEVRALDKVFRPETREEFCKLQTKTKVTVLEGDILDAQCLRRACQGISVVIHTAAAIDVFGAIPRQTIIDINLKGTLNLLEACVQASVPAFIYTSSIDVAGPNSYKEIVLNGHEEQQHESTWSDPYPYSKKMAEKAVLAANGSSLKNGGTLHTCALRPMYIYGEKSPLISVTIIRAVKNSGILDVTGKFSTVNPVYVNNAAWAHILAARGLQDPRKSPNIQGQFYYISDDTPHQSYDDLNYVLSKDWGLRPDSSWRPPVALLYWLGFLLELVSFLLRPVYNYQPPFNRHLVTLSNTVFTFSYKKAQRDLGYEPLVGWEEARENTSEWIGSLVEQHKGTLNTKAQ</sequence>
<name>3BHS1_MESAU</name>
<organism>
    <name type="scientific">Mesocricetus auratus</name>
    <name type="common">Golden hamster</name>
    <dbReference type="NCBI Taxonomy" id="10036"/>
    <lineage>
        <taxon>Eukaryota</taxon>
        <taxon>Metazoa</taxon>
        <taxon>Chordata</taxon>
        <taxon>Craniata</taxon>
        <taxon>Vertebrata</taxon>
        <taxon>Euteleostomi</taxon>
        <taxon>Mammalia</taxon>
        <taxon>Eutheria</taxon>
        <taxon>Euarchontoglires</taxon>
        <taxon>Glires</taxon>
        <taxon>Rodentia</taxon>
        <taxon>Myomorpha</taxon>
        <taxon>Muroidea</taxon>
        <taxon>Cricetidae</taxon>
        <taxon>Cricetinae</taxon>
        <taxon>Mesocricetus</taxon>
    </lineage>
</organism>
<comment type="function">
    <text evidence="1 2">A bifunctional enzyme responsible for the oxidation and isomerization of 3beta-hydroxy-Delta(5)-steroid precursors to 3-oxo-Delta(4)-steroids, an essential step in steroid hormone biosynthesis. Specifically catalyzes the conversion of pregnenolone to progesterone, 17alpha-hydroxypregnenolone to 17alpha-hydroxyprogesterone, dehydroepiandrosterone (DHEA) to 4-androstenedione, and androstenediol to testosterone. Additionally, catalyzes the interconversion between 3beta-hydroxy and 3-oxo-5alpha-androstane steroids controlling the bioavalability of the active forms. Specifically converts dihydrotestosterone to its inactive form 5alpha-androstanediol, that does not bind androgen receptor/AR. Also converts androstanedione, a precursor of testosterone and estrone, to epiandrosterone. Expected to use NAD(+) as preferred electron donor for the 3-beta-hydroxy-steroid dehydrogenase activity and NADPH for the 3-ketosteroid reductase activity.</text>
</comment>
<comment type="catalytic activity">
    <reaction evidence="2">
        <text>a 3beta-hydroxy-Delta(5)-steroid + NAD(+) = a 3-oxo-Delta(5)-steroid + NADH + H(+)</text>
        <dbReference type="Rhea" id="RHEA:24076"/>
        <dbReference type="ChEBI" id="CHEBI:1722"/>
        <dbReference type="ChEBI" id="CHEBI:15378"/>
        <dbReference type="ChEBI" id="CHEBI:47907"/>
        <dbReference type="ChEBI" id="CHEBI:57540"/>
        <dbReference type="ChEBI" id="CHEBI:57945"/>
        <dbReference type="EC" id="1.1.1.145"/>
    </reaction>
</comment>
<comment type="catalytic activity">
    <reaction evidence="2">
        <text>pregnenolone + NAD(+) = pregn-5-ene-3,20-dione + NADH + H(+)</text>
        <dbReference type="Rhea" id="RHEA:43924"/>
        <dbReference type="ChEBI" id="CHEBI:15378"/>
        <dbReference type="ChEBI" id="CHEBI:16581"/>
        <dbReference type="ChEBI" id="CHEBI:57540"/>
        <dbReference type="ChEBI" id="CHEBI:57945"/>
        <dbReference type="ChEBI" id="CHEBI:63837"/>
    </reaction>
</comment>
<comment type="catalytic activity">
    <reaction evidence="2">
        <text>3beta-hydroxyandrost-5-en-17-one + NAD(+) = androst-5-ene-3,17-dione + NADH + H(+)</text>
        <dbReference type="Rhea" id="RHEA:43932"/>
        <dbReference type="ChEBI" id="CHEBI:15378"/>
        <dbReference type="ChEBI" id="CHEBI:28689"/>
        <dbReference type="ChEBI" id="CHEBI:57540"/>
        <dbReference type="ChEBI" id="CHEBI:57945"/>
        <dbReference type="ChEBI" id="CHEBI:83865"/>
        <dbReference type="EC" id="1.1.1.145"/>
    </reaction>
</comment>
<comment type="catalytic activity">
    <reaction evidence="2">
        <text>androst-5-en-3beta,17beta-diol + NAD(+) = 17beta-hydroxy-androst-5-en-3-one + NADH + H(+)</text>
        <dbReference type="Rhea" id="RHEA:56932"/>
        <dbReference type="ChEBI" id="CHEBI:2710"/>
        <dbReference type="ChEBI" id="CHEBI:15378"/>
        <dbReference type="ChEBI" id="CHEBI:57540"/>
        <dbReference type="ChEBI" id="CHEBI:57945"/>
        <dbReference type="ChEBI" id="CHEBI:141179"/>
    </reaction>
</comment>
<comment type="catalytic activity">
    <reaction evidence="2">
        <text>a 3beta-hydroxysteroid + NADP(+) = a 3-oxosteroid + NADPH + H(+)</text>
        <dbReference type="Rhea" id="RHEA:34787"/>
        <dbReference type="ChEBI" id="CHEBI:15378"/>
        <dbReference type="ChEBI" id="CHEBI:36836"/>
        <dbReference type="ChEBI" id="CHEBI:47788"/>
        <dbReference type="ChEBI" id="CHEBI:57783"/>
        <dbReference type="ChEBI" id="CHEBI:58349"/>
        <dbReference type="EC" id="1.1.1.270"/>
    </reaction>
</comment>
<comment type="catalytic activity">
    <reaction evidence="2">
        <text>5alpha-androstane-3beta,17beta-diol + NADP(+) = 17beta-hydroxy-5alpha-androstan-3-one + NADPH + H(+)</text>
        <dbReference type="Rhea" id="RHEA:16297"/>
        <dbReference type="ChEBI" id="CHEBI:15378"/>
        <dbReference type="ChEBI" id="CHEBI:16330"/>
        <dbReference type="ChEBI" id="CHEBI:18329"/>
        <dbReference type="ChEBI" id="CHEBI:57783"/>
        <dbReference type="ChEBI" id="CHEBI:58349"/>
        <dbReference type="EC" id="1.1.1.210"/>
    </reaction>
</comment>
<comment type="catalytic activity">
    <reaction evidence="2">
        <text>3beta-hydroxy-5alpha-androstan-17-one + NADP(+) = 5alpha-androstan-3,17-dione + NADPH + H(+)</text>
        <dbReference type="Rhea" id="RHEA:56916"/>
        <dbReference type="ChEBI" id="CHEBI:15378"/>
        <dbReference type="ChEBI" id="CHEBI:15994"/>
        <dbReference type="ChEBI" id="CHEBI:57783"/>
        <dbReference type="ChEBI" id="CHEBI:58349"/>
        <dbReference type="ChEBI" id="CHEBI:541975"/>
    </reaction>
</comment>
<comment type="catalytic activity">
    <reaction evidence="2">
        <text>a 3-oxo-Delta(5)-steroid = a 3-oxo-Delta(4)-steroid</text>
        <dbReference type="Rhea" id="RHEA:14709"/>
        <dbReference type="ChEBI" id="CHEBI:47907"/>
        <dbReference type="ChEBI" id="CHEBI:47909"/>
        <dbReference type="EC" id="5.3.3.1"/>
    </reaction>
</comment>
<comment type="catalytic activity">
    <reaction evidence="2">
        <text>pregn-5-ene-3,20-dione = progesterone</text>
        <dbReference type="Rhea" id="RHEA:43928"/>
        <dbReference type="ChEBI" id="CHEBI:17026"/>
        <dbReference type="ChEBI" id="CHEBI:63837"/>
    </reaction>
</comment>
<comment type="catalytic activity">
    <reaction evidence="2">
        <text>androst-5-ene-3,17-dione = androst-4-ene-3,17-dione</text>
        <dbReference type="Rhea" id="RHEA:43936"/>
        <dbReference type="ChEBI" id="CHEBI:16422"/>
        <dbReference type="ChEBI" id="CHEBI:83865"/>
    </reaction>
</comment>
<comment type="catalytic activity">
    <reaction evidence="2">
        <text>17beta-hydroxy-androst-5-en-3-one = testosterone</text>
        <dbReference type="Rhea" id="RHEA:56936"/>
        <dbReference type="ChEBI" id="CHEBI:17347"/>
        <dbReference type="ChEBI" id="CHEBI:141179"/>
    </reaction>
</comment>
<comment type="catalytic activity">
    <reaction evidence="1">
        <text>5alpha-androstane-3beta,17beta-diol + NAD(+) = 17beta-hydroxy-5alpha-androstan-3-one + NADH + H(+)</text>
        <dbReference type="Rhea" id="RHEA:42184"/>
        <dbReference type="ChEBI" id="CHEBI:15378"/>
        <dbReference type="ChEBI" id="CHEBI:16330"/>
        <dbReference type="ChEBI" id="CHEBI:18329"/>
        <dbReference type="ChEBI" id="CHEBI:57540"/>
        <dbReference type="ChEBI" id="CHEBI:57945"/>
    </reaction>
</comment>
<comment type="pathway">
    <text evidence="2">Steroid hormone biosynthesis.</text>
</comment>
<comment type="pathway">
    <text evidence="2">Steroid metabolism.</text>
</comment>
<comment type="subcellular location">
    <subcellularLocation>
        <location>Endoplasmic reticulum membrane</location>
        <topology>Single-pass membrane protein</topology>
    </subcellularLocation>
    <subcellularLocation>
        <location>Mitochondrion membrane</location>
        <topology>Single-pass membrane protein</topology>
    </subcellularLocation>
</comment>
<comment type="tissue specificity">
    <text>High levels in adrenal gland, kidney and male liver. Low levels in female liver.</text>
</comment>
<comment type="similarity">
    <text evidence="5">Belongs to the 3-beta-HSD family.</text>
</comment>
<feature type="chain" id="PRO_0000087777" description="3 beta-hydroxysteroid dehydrogenase/Delta 5--&gt;4-isomerase type 1">
    <location>
        <begin position="1"/>
        <end position="373"/>
    </location>
</feature>
<feature type="transmembrane region" description="Helical" evidence="4">
    <location>
        <begin position="288"/>
        <end position="308"/>
    </location>
</feature>
<feature type="active site" description="Proton donor" evidence="3">
    <location>
        <position position="159"/>
    </location>
</feature>
<feature type="binding site" evidence="3">
    <location>
        <begin position="10"/>
        <end position="15"/>
    </location>
    <ligand>
        <name>NADP(+)</name>
        <dbReference type="ChEBI" id="CHEBI:58349"/>
    </ligand>
</feature>
<feature type="binding site" evidence="3">
    <location>
        <position position="155"/>
    </location>
    <ligand>
        <name>NADP(+)</name>
        <dbReference type="ChEBI" id="CHEBI:58349"/>
    </ligand>
</feature>
<feature type="binding site" evidence="3">
    <location>
        <position position="159"/>
    </location>
    <ligand>
        <name>NADP(+)</name>
        <dbReference type="ChEBI" id="CHEBI:58349"/>
    </ligand>
</feature>
<dbReference type="EC" id="1.1.1.145" evidence="2"/>
<dbReference type="EC" id="1.1.1.270" evidence="2"/>
<dbReference type="EC" id="1.1.1.210" evidence="2"/>
<dbReference type="EC" id="5.3.3.1" evidence="2"/>
<dbReference type="EMBL" id="L38709">
    <property type="protein sequence ID" value="AAB52546.1"/>
    <property type="molecule type" value="mRNA"/>
</dbReference>
<dbReference type="RefSeq" id="NP_001297496.1">
    <property type="nucleotide sequence ID" value="NM_001310567.1"/>
</dbReference>
<dbReference type="SMR" id="Q60555"/>
<dbReference type="GeneID" id="101842851"/>
<dbReference type="KEGG" id="maua:101842851"/>
<dbReference type="OrthoDB" id="1925334at2759"/>
<dbReference type="Proteomes" id="UP000189706">
    <property type="component" value="Unplaced"/>
</dbReference>
<dbReference type="GO" id="GO:0005789">
    <property type="term" value="C:endoplasmic reticulum membrane"/>
    <property type="evidence" value="ECO:0007669"/>
    <property type="project" value="UniProtKB-SubCell"/>
</dbReference>
<dbReference type="GO" id="GO:0031966">
    <property type="term" value="C:mitochondrial membrane"/>
    <property type="evidence" value="ECO:0007669"/>
    <property type="project" value="UniProtKB-SubCell"/>
</dbReference>
<dbReference type="GO" id="GO:0003854">
    <property type="term" value="F:3-beta-hydroxy-Delta5-steroid dehydrogenase (NAD+) activity"/>
    <property type="evidence" value="ECO:0007669"/>
    <property type="project" value="UniProtKB-EC"/>
</dbReference>
<dbReference type="GO" id="GO:0000253">
    <property type="term" value="F:3-beta-hydroxysteroid 3-dehydrogenase (NADP+) activity"/>
    <property type="evidence" value="ECO:0007669"/>
    <property type="project" value="UniProtKB-EC"/>
</dbReference>
<dbReference type="GO" id="GO:0047024">
    <property type="term" value="F:5-alpha-androstane-3-beta,17-beta-diol dehydrogenase (NADP+) activity"/>
    <property type="evidence" value="ECO:0007669"/>
    <property type="project" value="UniProtKB-EC"/>
</dbReference>
<dbReference type="GO" id="GO:0004769">
    <property type="term" value="F:steroid Delta-isomerase activity"/>
    <property type="evidence" value="ECO:0007669"/>
    <property type="project" value="UniProtKB-EC"/>
</dbReference>
<dbReference type="GO" id="GO:0006694">
    <property type="term" value="P:steroid biosynthetic process"/>
    <property type="evidence" value="ECO:0007669"/>
    <property type="project" value="UniProtKB-KW"/>
</dbReference>
<dbReference type="FunFam" id="3.40.50.720:FF:000220">
    <property type="entry name" value="3 beta-hydroxysteroid dehydrogenase/Delta 5--&gt;4-isomerase type 1"/>
    <property type="match status" value="1"/>
</dbReference>
<dbReference type="Gene3D" id="3.40.50.720">
    <property type="entry name" value="NAD(P)-binding Rossmann-like Domain"/>
    <property type="match status" value="1"/>
</dbReference>
<dbReference type="InterPro" id="IPR002225">
    <property type="entry name" value="3Beta_OHSteriod_DH/Estase"/>
</dbReference>
<dbReference type="InterPro" id="IPR050177">
    <property type="entry name" value="Lipid_A_modif_metabolic_enz"/>
</dbReference>
<dbReference type="InterPro" id="IPR036291">
    <property type="entry name" value="NAD(P)-bd_dom_sf"/>
</dbReference>
<dbReference type="PANTHER" id="PTHR43245">
    <property type="entry name" value="BIFUNCTIONAL POLYMYXIN RESISTANCE PROTEIN ARNA"/>
    <property type="match status" value="1"/>
</dbReference>
<dbReference type="PANTHER" id="PTHR43245:SF51">
    <property type="entry name" value="SHORT CHAIN DEHYDROGENASE_REDUCTASE FAMILY 42E, MEMBER 2"/>
    <property type="match status" value="1"/>
</dbReference>
<dbReference type="Pfam" id="PF01073">
    <property type="entry name" value="3Beta_HSD"/>
    <property type="match status" value="1"/>
</dbReference>
<dbReference type="SUPFAM" id="SSF51735">
    <property type="entry name" value="NAD(P)-binding Rossmann-fold domains"/>
    <property type="match status" value="1"/>
</dbReference>
<accession>Q60555</accession>
<accession>Q60556</accession>
<proteinExistence type="evidence at transcript level"/>